<organism>
    <name type="scientific">Aggregatibacter aphrophilus</name>
    <name type="common">Haemophilus aphrophilus</name>
    <dbReference type="NCBI Taxonomy" id="732"/>
    <lineage>
        <taxon>Bacteria</taxon>
        <taxon>Pseudomonadati</taxon>
        <taxon>Pseudomonadota</taxon>
        <taxon>Gammaproteobacteria</taxon>
        <taxon>Pasteurellales</taxon>
        <taxon>Pasteurellaceae</taxon>
        <taxon>Aggregatibacter</taxon>
    </lineage>
</organism>
<proteinExistence type="evidence at transcript level"/>
<dbReference type="EMBL" id="D78254">
    <property type="protein sequence ID" value="BAA11318.1"/>
    <property type="molecule type" value="Genomic_DNA"/>
</dbReference>
<dbReference type="SMR" id="Q47948"/>
<dbReference type="STRING" id="732.ADJ80_08040"/>
<dbReference type="eggNOG" id="COG0664">
    <property type="taxonomic scope" value="Bacteria"/>
</dbReference>
<dbReference type="GO" id="GO:0005737">
    <property type="term" value="C:cytoplasm"/>
    <property type="evidence" value="ECO:0007669"/>
    <property type="project" value="UniProtKB-SubCell"/>
</dbReference>
<dbReference type="GO" id="GO:0051539">
    <property type="term" value="F:4 iron, 4 sulfur cluster binding"/>
    <property type="evidence" value="ECO:0007669"/>
    <property type="project" value="UniProtKB-KW"/>
</dbReference>
<dbReference type="GO" id="GO:0003677">
    <property type="term" value="F:DNA binding"/>
    <property type="evidence" value="ECO:0007669"/>
    <property type="project" value="UniProtKB-KW"/>
</dbReference>
<dbReference type="GO" id="GO:0046872">
    <property type="term" value="F:metal ion binding"/>
    <property type="evidence" value="ECO:0007669"/>
    <property type="project" value="UniProtKB-KW"/>
</dbReference>
<dbReference type="GO" id="GO:0006355">
    <property type="term" value="P:regulation of DNA-templated transcription"/>
    <property type="evidence" value="ECO:0007669"/>
    <property type="project" value="InterPro"/>
</dbReference>
<dbReference type="CDD" id="cd00092">
    <property type="entry name" value="HTH_CRP"/>
    <property type="match status" value="1"/>
</dbReference>
<dbReference type="FunFam" id="1.10.10.10:FF:000028">
    <property type="entry name" value="Fumarate/nitrate reduction transcriptional regulator Fnr"/>
    <property type="match status" value="1"/>
</dbReference>
<dbReference type="Gene3D" id="2.60.120.10">
    <property type="entry name" value="Jelly Rolls"/>
    <property type="match status" value="1"/>
</dbReference>
<dbReference type="InterPro" id="IPR012318">
    <property type="entry name" value="HTH_CRP"/>
</dbReference>
<dbReference type="InterPro" id="IPR014710">
    <property type="entry name" value="RmlC-like_jellyroll"/>
</dbReference>
<dbReference type="InterPro" id="IPR036390">
    <property type="entry name" value="WH_DNA-bd_sf"/>
</dbReference>
<dbReference type="Pfam" id="PF00325">
    <property type="entry name" value="Crp"/>
    <property type="match status" value="1"/>
</dbReference>
<dbReference type="PRINTS" id="PR00034">
    <property type="entry name" value="HTHCRP"/>
</dbReference>
<dbReference type="SUPFAM" id="SSF46785">
    <property type="entry name" value="Winged helix' DNA-binding domain"/>
    <property type="match status" value="1"/>
</dbReference>
<dbReference type="PROSITE" id="PS51063">
    <property type="entry name" value="HTH_CRP_2"/>
    <property type="match status" value="1"/>
</dbReference>
<protein>
    <recommendedName>
        <fullName>Anaerobic regulatory protein</fullName>
    </recommendedName>
</protein>
<sequence>CEIPFDILDDLSGKMPKLRQQIMRLMSSEIKSDQEMILLLSKMNAEERLAAFIYNLSQRYSARGFSAREFRLTMTRGDIGNYLGLTVETISR</sequence>
<feature type="chain" id="PRO_0000100176" description="Anaerobic regulatory protein">
    <location>
        <begin position="1" status="less than"/>
        <end position="92" status="greater than"/>
    </location>
</feature>
<feature type="domain" description="HTH crp-type" evidence="3">
    <location>
        <begin position="43"/>
        <end position="92" status="greater than"/>
    </location>
</feature>
<feature type="binding site" evidence="2">
    <location>
        <position position="1"/>
    </location>
    <ligand>
        <name>[4Fe-4S] cluster</name>
        <dbReference type="ChEBI" id="CHEBI:49883"/>
    </ligand>
</feature>
<feature type="non-terminal residue">
    <location>
        <position position="1"/>
    </location>
</feature>
<feature type="non-terminal residue">
    <location>
        <position position="92"/>
    </location>
</feature>
<comment type="function">
    <text>It is involved in the activation of genes necessary for anaerobic respiration.</text>
</comment>
<comment type="cofactor">
    <cofactor evidence="1">
        <name>[4Fe-4S] cluster</name>
        <dbReference type="ChEBI" id="CHEBI:49883"/>
    </cofactor>
    <text evidence="1">Binds 1 [4Fe-4S] cluster per subunit.</text>
</comment>
<comment type="subunit">
    <text evidence="1">Homodimer.</text>
</comment>
<comment type="subcellular location">
    <subcellularLocation>
        <location evidence="4">Cytoplasm</location>
    </subcellularLocation>
</comment>
<comment type="induction">
    <text>By anaerobiosis.</text>
</comment>
<accession>Q47948</accession>
<name>FNR_AGGAP</name>
<reference key="1">
    <citation type="journal article" date="1996" name="FEMS Microbiol. Lett.">
        <title>Novel FNR homologues identified in four representative oral facultative anaerobes: Capnocytophaga ochracea, Capnocytophaga sputigena, Haemophilus aphrophilus, and Actinobacillus actinomycetemcomitans.</title>
        <authorList>
            <person name="Hattori T."/>
            <person name="Takahashi K."/>
            <person name="Nakanishi T."/>
            <person name="Ohta H."/>
            <person name="Fukui K."/>
            <person name="Taniguchi S."/>
            <person name="Takigawa M."/>
        </authorList>
    </citation>
    <scope>NUCLEOTIDE SEQUENCE [GENOMIC DNA]</scope>
    <source>
        <strain>ATCC 13252</strain>
    </source>
</reference>
<gene>
    <name type="primary">fnr</name>
</gene>
<keyword id="KW-0004">4Fe-4S</keyword>
<keyword id="KW-0010">Activator</keyword>
<keyword id="KW-0963">Cytoplasm</keyword>
<keyword id="KW-0238">DNA-binding</keyword>
<keyword id="KW-0408">Iron</keyword>
<keyword id="KW-0411">Iron-sulfur</keyword>
<keyword id="KW-0479">Metal-binding</keyword>
<keyword id="KW-0804">Transcription</keyword>
<keyword id="KW-0805">Transcription regulation</keyword>
<evidence type="ECO:0000250" key="1"/>
<evidence type="ECO:0000255" key="2"/>
<evidence type="ECO:0000255" key="3">
    <source>
        <dbReference type="PROSITE-ProRule" id="PRU00387"/>
    </source>
</evidence>
<evidence type="ECO:0000305" key="4"/>